<dbReference type="EC" id="2.7.7.72" evidence="1"/>
<dbReference type="EC" id="3.1.3.-" evidence="1"/>
<dbReference type="EC" id="3.1.4.-" evidence="1"/>
<dbReference type="EMBL" id="CP001616">
    <property type="protein sequence ID" value="ACQ94258.1"/>
    <property type="molecule type" value="Genomic_DNA"/>
</dbReference>
<dbReference type="RefSeq" id="WP_015879707.1">
    <property type="nucleotide sequence ID" value="NC_012691.1"/>
</dbReference>
<dbReference type="SMR" id="C4LB55"/>
<dbReference type="STRING" id="595494.Tola_2664"/>
<dbReference type="KEGG" id="tau:Tola_2664"/>
<dbReference type="eggNOG" id="COG0617">
    <property type="taxonomic scope" value="Bacteria"/>
</dbReference>
<dbReference type="HOGENOM" id="CLU_015961_1_1_6"/>
<dbReference type="OrthoDB" id="9805698at2"/>
<dbReference type="Proteomes" id="UP000009073">
    <property type="component" value="Chromosome"/>
</dbReference>
<dbReference type="GO" id="GO:0005524">
    <property type="term" value="F:ATP binding"/>
    <property type="evidence" value="ECO:0007669"/>
    <property type="project" value="UniProtKB-UniRule"/>
</dbReference>
<dbReference type="GO" id="GO:0004810">
    <property type="term" value="F:CCA tRNA nucleotidyltransferase activity"/>
    <property type="evidence" value="ECO:0007669"/>
    <property type="project" value="UniProtKB-UniRule"/>
</dbReference>
<dbReference type="GO" id="GO:0004112">
    <property type="term" value="F:cyclic-nucleotide phosphodiesterase activity"/>
    <property type="evidence" value="ECO:0007669"/>
    <property type="project" value="UniProtKB-UniRule"/>
</dbReference>
<dbReference type="GO" id="GO:0000287">
    <property type="term" value="F:magnesium ion binding"/>
    <property type="evidence" value="ECO:0007669"/>
    <property type="project" value="UniProtKB-UniRule"/>
</dbReference>
<dbReference type="GO" id="GO:0016791">
    <property type="term" value="F:phosphatase activity"/>
    <property type="evidence" value="ECO:0007669"/>
    <property type="project" value="UniProtKB-UniRule"/>
</dbReference>
<dbReference type="GO" id="GO:0000049">
    <property type="term" value="F:tRNA binding"/>
    <property type="evidence" value="ECO:0007669"/>
    <property type="project" value="UniProtKB-UniRule"/>
</dbReference>
<dbReference type="GO" id="GO:0042245">
    <property type="term" value="P:RNA repair"/>
    <property type="evidence" value="ECO:0007669"/>
    <property type="project" value="UniProtKB-KW"/>
</dbReference>
<dbReference type="GO" id="GO:0001680">
    <property type="term" value="P:tRNA 3'-terminal CCA addition"/>
    <property type="evidence" value="ECO:0007669"/>
    <property type="project" value="UniProtKB-UniRule"/>
</dbReference>
<dbReference type="CDD" id="cd00077">
    <property type="entry name" value="HDc"/>
    <property type="match status" value="1"/>
</dbReference>
<dbReference type="FunFam" id="1.10.3090.10:FF:000001">
    <property type="entry name" value="Multifunctional CCA protein"/>
    <property type="match status" value="1"/>
</dbReference>
<dbReference type="Gene3D" id="3.30.460.10">
    <property type="entry name" value="Beta Polymerase, domain 2"/>
    <property type="match status" value="1"/>
</dbReference>
<dbReference type="Gene3D" id="1.10.3090.10">
    <property type="entry name" value="cca-adding enzyme, domain 2"/>
    <property type="match status" value="1"/>
</dbReference>
<dbReference type="HAMAP" id="MF_01261">
    <property type="entry name" value="CCA_bact_type1"/>
    <property type="match status" value="1"/>
</dbReference>
<dbReference type="HAMAP" id="MF_01262">
    <property type="entry name" value="CCA_bact_type2"/>
    <property type="match status" value="1"/>
</dbReference>
<dbReference type="InterPro" id="IPR012006">
    <property type="entry name" value="CCA_bact"/>
</dbReference>
<dbReference type="InterPro" id="IPR003607">
    <property type="entry name" value="HD/PDEase_dom"/>
</dbReference>
<dbReference type="InterPro" id="IPR006674">
    <property type="entry name" value="HD_domain"/>
</dbReference>
<dbReference type="InterPro" id="IPR043519">
    <property type="entry name" value="NT_sf"/>
</dbReference>
<dbReference type="InterPro" id="IPR002646">
    <property type="entry name" value="PolA_pol_head_dom"/>
</dbReference>
<dbReference type="InterPro" id="IPR032828">
    <property type="entry name" value="PolyA_RNA-bd"/>
</dbReference>
<dbReference type="InterPro" id="IPR050124">
    <property type="entry name" value="tRNA_CCA-adding_enzyme"/>
</dbReference>
<dbReference type="NCBIfam" id="NF008137">
    <property type="entry name" value="PRK10885.1"/>
    <property type="match status" value="1"/>
</dbReference>
<dbReference type="PANTHER" id="PTHR47545">
    <property type="entry name" value="MULTIFUNCTIONAL CCA PROTEIN"/>
    <property type="match status" value="1"/>
</dbReference>
<dbReference type="PANTHER" id="PTHR47545:SF1">
    <property type="entry name" value="MULTIFUNCTIONAL CCA PROTEIN"/>
    <property type="match status" value="1"/>
</dbReference>
<dbReference type="Pfam" id="PF01966">
    <property type="entry name" value="HD"/>
    <property type="match status" value="1"/>
</dbReference>
<dbReference type="Pfam" id="PF01743">
    <property type="entry name" value="PolyA_pol"/>
    <property type="match status" value="1"/>
</dbReference>
<dbReference type="Pfam" id="PF12627">
    <property type="entry name" value="PolyA_pol_RNAbd"/>
    <property type="match status" value="1"/>
</dbReference>
<dbReference type="PIRSF" id="PIRSF000813">
    <property type="entry name" value="CCA_bact"/>
    <property type="match status" value="1"/>
</dbReference>
<dbReference type="SUPFAM" id="SSF81301">
    <property type="entry name" value="Nucleotidyltransferase"/>
    <property type="match status" value="1"/>
</dbReference>
<dbReference type="SUPFAM" id="SSF81891">
    <property type="entry name" value="Poly A polymerase C-terminal region-like"/>
    <property type="match status" value="1"/>
</dbReference>
<dbReference type="PROSITE" id="PS51831">
    <property type="entry name" value="HD"/>
    <property type="match status" value="1"/>
</dbReference>
<name>CCA_TOLAT</name>
<gene>
    <name evidence="1" type="primary">cca</name>
    <name type="ordered locus">Tola_2664</name>
</gene>
<protein>
    <recommendedName>
        <fullName evidence="1">Multifunctional CCA protein</fullName>
    </recommendedName>
    <domain>
        <recommendedName>
            <fullName evidence="1">CCA-adding enzyme</fullName>
            <ecNumber evidence="1">2.7.7.72</ecNumber>
        </recommendedName>
        <alternativeName>
            <fullName evidence="1">CCA tRNA nucleotidyltransferase</fullName>
        </alternativeName>
        <alternativeName>
            <fullName evidence="1">tRNA CCA-pyrophosphorylase</fullName>
        </alternativeName>
        <alternativeName>
            <fullName evidence="1">tRNA adenylyl-/cytidylyl-transferase</fullName>
        </alternativeName>
        <alternativeName>
            <fullName evidence="1">tRNA nucleotidyltransferase</fullName>
        </alternativeName>
        <alternativeName>
            <fullName evidence="1">tRNA-NT</fullName>
        </alternativeName>
    </domain>
    <domain>
        <recommendedName>
            <fullName evidence="1">2'-nucleotidase</fullName>
            <ecNumber evidence="1">3.1.3.-</ecNumber>
        </recommendedName>
    </domain>
    <domain>
        <recommendedName>
            <fullName evidence="1">2',3'-cyclic phosphodiesterase</fullName>
            <ecNumber evidence="1">3.1.4.-</ecNumber>
        </recommendedName>
    </domain>
    <domain>
        <recommendedName>
            <fullName evidence="1">Phosphatase</fullName>
            <ecNumber evidence="1">3.1.3.-</ecNumber>
        </recommendedName>
    </domain>
</protein>
<comment type="function">
    <text evidence="1">Catalyzes the addition and repair of the essential 3'-terminal CCA sequence in tRNAs without using a nucleic acid template. Adds these three nucleotides in the order of C, C, and A to the tRNA nucleotide-73, using CTP and ATP as substrates and producing inorganic pyrophosphate. tRNA 3'-terminal CCA addition is required both for tRNA processing and repair. Also involved in tRNA surveillance by mediating tandem CCA addition to generate a CCACCA at the 3' terminus of unstable tRNAs. While stable tRNAs receive only 3'-terminal CCA, unstable tRNAs are marked with CCACCA and rapidly degraded.</text>
</comment>
<comment type="catalytic activity">
    <reaction evidence="1">
        <text>a tRNA precursor + 2 CTP + ATP = a tRNA with a 3' CCA end + 3 diphosphate</text>
        <dbReference type="Rhea" id="RHEA:14433"/>
        <dbReference type="Rhea" id="RHEA-COMP:10465"/>
        <dbReference type="Rhea" id="RHEA-COMP:10468"/>
        <dbReference type="ChEBI" id="CHEBI:30616"/>
        <dbReference type="ChEBI" id="CHEBI:33019"/>
        <dbReference type="ChEBI" id="CHEBI:37563"/>
        <dbReference type="ChEBI" id="CHEBI:74896"/>
        <dbReference type="ChEBI" id="CHEBI:83071"/>
        <dbReference type="EC" id="2.7.7.72"/>
    </reaction>
</comment>
<comment type="catalytic activity">
    <reaction evidence="1">
        <text>a tRNA with a 3' CCA end + 2 CTP + ATP = a tRNA with a 3' CCACCA end + 3 diphosphate</text>
        <dbReference type="Rhea" id="RHEA:76235"/>
        <dbReference type="Rhea" id="RHEA-COMP:10468"/>
        <dbReference type="Rhea" id="RHEA-COMP:18655"/>
        <dbReference type="ChEBI" id="CHEBI:30616"/>
        <dbReference type="ChEBI" id="CHEBI:33019"/>
        <dbReference type="ChEBI" id="CHEBI:37563"/>
        <dbReference type="ChEBI" id="CHEBI:83071"/>
        <dbReference type="ChEBI" id="CHEBI:195187"/>
    </reaction>
    <physiologicalReaction direction="left-to-right" evidence="1">
        <dbReference type="Rhea" id="RHEA:76236"/>
    </physiologicalReaction>
</comment>
<comment type="cofactor">
    <cofactor evidence="1">
        <name>Mg(2+)</name>
        <dbReference type="ChEBI" id="CHEBI:18420"/>
    </cofactor>
    <text evidence="1">Magnesium is required for nucleotidyltransferase activity.</text>
</comment>
<comment type="cofactor">
    <cofactor evidence="1">
        <name>Ni(2+)</name>
        <dbReference type="ChEBI" id="CHEBI:49786"/>
    </cofactor>
    <text evidence="1">Nickel for phosphatase activity.</text>
</comment>
<comment type="subunit">
    <text evidence="1">Monomer. Can also form homodimers and oligomers.</text>
</comment>
<comment type="domain">
    <text evidence="1">Comprises two domains: an N-terminal domain containing the nucleotidyltransferase activity and a C-terminal HD domain associated with both phosphodiesterase and phosphatase activities.</text>
</comment>
<comment type="miscellaneous">
    <text evidence="1">A single active site specifically recognizes both ATP and CTP and is responsible for their addition.</text>
</comment>
<comment type="similarity">
    <text evidence="1">Belongs to the tRNA nucleotidyltransferase/poly(A) polymerase family. Bacterial CCA-adding enzyme type 1 subfamily.</text>
</comment>
<accession>C4LB55</accession>
<sequence length="410" mass="46604">MQIYLVGGAVRDTLLGLPVTERDYVVVGSEAQTLLDLGYQPVGRDFPVFLHPQTKEEYALARIERKQGKGYTGFACYAAPDVTLEQDLLRRDLTINAIAQDQDGQLYDPYGGISDLNNRVLRHISPAFSEDPLRVLRVARFAARFHHLGFYIAPETLALMRKLSRSGELNHLTPERIWKEIEKVLSGRNPQIFFEILHDCEALNVLLPEVDALFGIPARPDWHPEVDTGIHVMMALREASQRSEQLAVRFATLCHDLGKAQTPAHILPSHHGHGERGTPLIRELCKRLKVPNDCRDLAILVSELHSLVHTALQLRPATMLKLFDRLDVWRKPERLSQLLLCCQADFYGRQGFAEREYPEPEYVQQAYDAAVAVAVKPIVEAGYTGEAIRLQLSRRRIFAIRDVHCRWNDK</sequence>
<reference key="1">
    <citation type="submission" date="2009-05" db="EMBL/GenBank/DDBJ databases">
        <title>Complete sequence of Tolumonas auensis DSM 9187.</title>
        <authorList>
            <consortium name="US DOE Joint Genome Institute"/>
            <person name="Lucas S."/>
            <person name="Copeland A."/>
            <person name="Lapidus A."/>
            <person name="Glavina del Rio T."/>
            <person name="Tice H."/>
            <person name="Bruce D."/>
            <person name="Goodwin L."/>
            <person name="Pitluck S."/>
            <person name="Chertkov O."/>
            <person name="Brettin T."/>
            <person name="Detter J.C."/>
            <person name="Han C."/>
            <person name="Larimer F."/>
            <person name="Land M."/>
            <person name="Hauser L."/>
            <person name="Kyrpides N."/>
            <person name="Mikhailova N."/>
            <person name="Spring S."/>
            <person name="Beller H."/>
        </authorList>
    </citation>
    <scope>NUCLEOTIDE SEQUENCE [LARGE SCALE GENOMIC DNA]</scope>
    <source>
        <strain>DSM 9187 / NBRC 110442 / TA 4</strain>
    </source>
</reference>
<feature type="chain" id="PRO_1000214135" description="Multifunctional CCA protein">
    <location>
        <begin position="1"/>
        <end position="410"/>
    </location>
</feature>
<feature type="domain" description="HD" evidence="1">
    <location>
        <begin position="228"/>
        <end position="329"/>
    </location>
</feature>
<feature type="binding site" evidence="1">
    <location>
        <position position="8"/>
    </location>
    <ligand>
        <name>ATP</name>
        <dbReference type="ChEBI" id="CHEBI:30616"/>
    </ligand>
</feature>
<feature type="binding site" evidence="1">
    <location>
        <position position="8"/>
    </location>
    <ligand>
        <name>CTP</name>
        <dbReference type="ChEBI" id="CHEBI:37563"/>
    </ligand>
</feature>
<feature type="binding site" evidence="1">
    <location>
        <position position="11"/>
    </location>
    <ligand>
        <name>ATP</name>
        <dbReference type="ChEBI" id="CHEBI:30616"/>
    </ligand>
</feature>
<feature type="binding site" evidence="1">
    <location>
        <position position="11"/>
    </location>
    <ligand>
        <name>CTP</name>
        <dbReference type="ChEBI" id="CHEBI:37563"/>
    </ligand>
</feature>
<feature type="binding site" evidence="1">
    <location>
        <position position="21"/>
    </location>
    <ligand>
        <name>Mg(2+)</name>
        <dbReference type="ChEBI" id="CHEBI:18420"/>
    </ligand>
</feature>
<feature type="binding site" evidence="1">
    <location>
        <position position="23"/>
    </location>
    <ligand>
        <name>Mg(2+)</name>
        <dbReference type="ChEBI" id="CHEBI:18420"/>
    </ligand>
</feature>
<feature type="binding site" evidence="1">
    <location>
        <position position="91"/>
    </location>
    <ligand>
        <name>ATP</name>
        <dbReference type="ChEBI" id="CHEBI:30616"/>
    </ligand>
</feature>
<feature type="binding site" evidence="1">
    <location>
        <position position="91"/>
    </location>
    <ligand>
        <name>CTP</name>
        <dbReference type="ChEBI" id="CHEBI:37563"/>
    </ligand>
</feature>
<feature type="binding site" evidence="1">
    <location>
        <position position="137"/>
    </location>
    <ligand>
        <name>ATP</name>
        <dbReference type="ChEBI" id="CHEBI:30616"/>
    </ligand>
</feature>
<feature type="binding site" evidence="1">
    <location>
        <position position="137"/>
    </location>
    <ligand>
        <name>CTP</name>
        <dbReference type="ChEBI" id="CHEBI:37563"/>
    </ligand>
</feature>
<feature type="binding site" evidence="1">
    <location>
        <position position="140"/>
    </location>
    <ligand>
        <name>ATP</name>
        <dbReference type="ChEBI" id="CHEBI:30616"/>
    </ligand>
</feature>
<feature type="binding site" evidence="1">
    <location>
        <position position="140"/>
    </location>
    <ligand>
        <name>CTP</name>
        <dbReference type="ChEBI" id="CHEBI:37563"/>
    </ligand>
</feature>
<proteinExistence type="inferred from homology"/>
<organism>
    <name type="scientific">Tolumonas auensis (strain DSM 9187 / NBRC 110442 / TA 4)</name>
    <dbReference type="NCBI Taxonomy" id="595494"/>
    <lineage>
        <taxon>Bacteria</taxon>
        <taxon>Pseudomonadati</taxon>
        <taxon>Pseudomonadota</taxon>
        <taxon>Gammaproteobacteria</taxon>
        <taxon>Aeromonadales</taxon>
        <taxon>Aeromonadaceae</taxon>
        <taxon>Tolumonas</taxon>
    </lineage>
</organism>
<keyword id="KW-0067">ATP-binding</keyword>
<keyword id="KW-0378">Hydrolase</keyword>
<keyword id="KW-0460">Magnesium</keyword>
<keyword id="KW-0479">Metal-binding</keyword>
<keyword id="KW-0511">Multifunctional enzyme</keyword>
<keyword id="KW-0533">Nickel</keyword>
<keyword id="KW-0547">Nucleotide-binding</keyword>
<keyword id="KW-0548">Nucleotidyltransferase</keyword>
<keyword id="KW-1185">Reference proteome</keyword>
<keyword id="KW-0692">RNA repair</keyword>
<keyword id="KW-0694">RNA-binding</keyword>
<keyword id="KW-0808">Transferase</keyword>
<keyword id="KW-0819">tRNA processing</keyword>
<evidence type="ECO:0000255" key="1">
    <source>
        <dbReference type="HAMAP-Rule" id="MF_01261"/>
    </source>
</evidence>